<gene>
    <name evidence="7" type="primary">WAPL1</name>
    <name evidence="9" type="ordered locus">At1g11060</name>
    <name evidence="10" type="ORF">T19D16.5</name>
</gene>
<name>WAPL1_ARATH</name>
<sequence length="930" mass="103633">MIIVKLTANRICCSLLQLRRSYEHFYIFVFLPEIPLFRFSHLKLFPKNLQIQRLVSAMMERTYGRRKPGIPRTLSDSLNDSVSQTEYLSSSSSPDIEPIDYSLLPFSSQESSSLWHSSSRSNFREDYPQNGGVVRRAKRVRNGAEAAAFTSTLLEAQEFGELMEHEDEVNFALDGLRKGHQLRIRRASLSSLLSICASQHQRRSLRAQGISQSIIDAILVLSLDDIPSNLAAATLFFALTADGQDEHFMESPKCIKFLIKLLKPVIVTSTEGKPRNIGFKLLSLLKDVDAARDPVKMDDPSSSDILSRVQELLVNCKEMRLNDSYITETTRPELSTKWVALLAMERACVSKISFDDTSGSVKKTGGNFKEKLRELGGLDAVLEVVMDCHAVMERWVEYDALSVQEKKDNLHKQSLMLLLKCLKIMENATFLSTDNQNHLLGFKKCLGSHDSRMSFTELTISVIKMLSGLHLRGGFSSPNTNNVNSHYSNGGNHDSVLEANRKVTNEVVTISSDTYSTVGSISTRNGSVSQRSQSIIHLDFSPTSMSGSQSSVSGNEPTTSKTRVGSTISGSFAGRLASLGSDIARTTLRTTQAGEPICKKFGEFAPPEESEDPFAFDLEDYKPSKWAVVSVNQKKSRAQKKKGCYKQSKDESLYQLFSSQEESSNHRLNSQEESSNRDCSTSLQPSHCTNDIDEECLCLLFDCLLTAVKVLMNLTNDNVVGCRQVGGCRGLESMAELIARHFPSFTRSQLFSEMEKTGSSHQKKDKYLTDQELDFLVAILGLLVNLVERDGVNRSRLASASVPITKPEELQESEQEMIPLLCSIFLTNQGSAETKEETTTFTLDDEEAVLEGEKEAEKMIVEAYSALLLAFLSTESRSIRNSIKDYLPKRNLAILVPVLERFVAFHMTLNMIPPETHKAVMGVIESCKSP</sequence>
<dbReference type="EMBL" id="U95973">
    <property type="protein sequence ID" value="AAB65476.1"/>
    <property type="status" value="ALT_SEQ"/>
    <property type="molecule type" value="Genomic_DNA"/>
</dbReference>
<dbReference type="EMBL" id="CP002684">
    <property type="protein sequence ID" value="AEE28678.1"/>
    <property type="molecule type" value="Genomic_DNA"/>
</dbReference>
<dbReference type="PIR" id="E86244">
    <property type="entry name" value="E86244"/>
</dbReference>
<dbReference type="RefSeq" id="NP_172573.2">
    <property type="nucleotide sequence ID" value="NM_100979.4"/>
</dbReference>
<dbReference type="SMR" id="F4I7C7"/>
<dbReference type="FunCoup" id="F4I7C7">
    <property type="interactions" value="1557"/>
</dbReference>
<dbReference type="STRING" id="3702.F4I7C7"/>
<dbReference type="iPTMnet" id="F4I7C7"/>
<dbReference type="PaxDb" id="3702-AT1G11060.1"/>
<dbReference type="ProteomicsDB" id="207595"/>
<dbReference type="EnsemblPlants" id="AT1G11060.1">
    <property type="protein sequence ID" value="AT1G11060.1"/>
    <property type="gene ID" value="AT1G11060"/>
</dbReference>
<dbReference type="GeneID" id="837647"/>
<dbReference type="Gramene" id="AT1G11060.1">
    <property type="protein sequence ID" value="AT1G11060.1"/>
    <property type="gene ID" value="AT1G11060"/>
</dbReference>
<dbReference type="KEGG" id="ath:AT1G11060"/>
<dbReference type="Araport" id="AT1G11060"/>
<dbReference type="TAIR" id="AT1G11060">
    <property type="gene designation" value="WAPL1"/>
</dbReference>
<dbReference type="eggNOG" id="KOG2152">
    <property type="taxonomic scope" value="Eukaryota"/>
</dbReference>
<dbReference type="HOGENOM" id="CLU_015006_0_0_1"/>
<dbReference type="InParanoid" id="F4I7C7"/>
<dbReference type="OMA" id="DFEPSKW"/>
<dbReference type="PRO" id="PR:F4I7C7"/>
<dbReference type="Proteomes" id="UP000006548">
    <property type="component" value="Chromosome 1"/>
</dbReference>
<dbReference type="ExpressionAtlas" id="F4I7C7">
    <property type="expression patterns" value="baseline and differential"/>
</dbReference>
<dbReference type="GO" id="GO:0005694">
    <property type="term" value="C:chromosome"/>
    <property type="evidence" value="ECO:0007669"/>
    <property type="project" value="UniProtKB-SubCell"/>
</dbReference>
<dbReference type="GO" id="GO:0005634">
    <property type="term" value="C:nucleus"/>
    <property type="evidence" value="ECO:0007669"/>
    <property type="project" value="UniProtKB-SubCell"/>
</dbReference>
<dbReference type="GO" id="GO:0051301">
    <property type="term" value="P:cell division"/>
    <property type="evidence" value="ECO:0007669"/>
    <property type="project" value="UniProtKB-KW"/>
</dbReference>
<dbReference type="GO" id="GO:0006281">
    <property type="term" value="P:DNA repair"/>
    <property type="evidence" value="ECO:0000315"/>
    <property type="project" value="UniProtKB"/>
</dbReference>
<dbReference type="GO" id="GO:0009793">
    <property type="term" value="P:embryo development ending in seed dormancy"/>
    <property type="evidence" value="ECO:0000316"/>
    <property type="project" value="TAIR"/>
</dbReference>
<dbReference type="GO" id="GO:0045132">
    <property type="term" value="P:meiotic chromosome segregation"/>
    <property type="evidence" value="ECO:0000316"/>
    <property type="project" value="TAIR"/>
</dbReference>
<dbReference type="GO" id="GO:0051177">
    <property type="term" value="P:meiotic sister chromatid cohesion"/>
    <property type="evidence" value="ECO:0000315"/>
    <property type="project" value="UniProtKB"/>
</dbReference>
<dbReference type="GO" id="GO:0010789">
    <property type="term" value="P:meiotic sister chromatid cohesion involved in meiosis I"/>
    <property type="evidence" value="ECO:0000316"/>
    <property type="project" value="TAIR"/>
</dbReference>
<dbReference type="GO" id="GO:0045144">
    <property type="term" value="P:meiotic sister chromatid segregation"/>
    <property type="evidence" value="ECO:0000315"/>
    <property type="project" value="UniProtKB"/>
</dbReference>
<dbReference type="GO" id="GO:0007064">
    <property type="term" value="P:mitotic sister chromatid cohesion"/>
    <property type="evidence" value="ECO:0000315"/>
    <property type="project" value="UniProtKB"/>
</dbReference>
<dbReference type="GO" id="GO:0000070">
    <property type="term" value="P:mitotic sister chromatid segregation"/>
    <property type="evidence" value="ECO:0000316"/>
    <property type="project" value="TAIR"/>
</dbReference>
<dbReference type="FunFam" id="1.25.10.10:FF:000519">
    <property type="entry name" value="WAPL (Wings apart-like protein regulation of heterochromatin) protein"/>
    <property type="match status" value="1"/>
</dbReference>
<dbReference type="FunFam" id="1.25.10.10:FF:000417">
    <property type="entry name" value="Wings apart-like protein-like isoform A"/>
    <property type="match status" value="1"/>
</dbReference>
<dbReference type="Gene3D" id="1.25.10.10">
    <property type="entry name" value="Leucine-rich Repeat Variant"/>
    <property type="match status" value="2"/>
</dbReference>
<dbReference type="InterPro" id="IPR011989">
    <property type="entry name" value="ARM-like"/>
</dbReference>
<dbReference type="InterPro" id="IPR016024">
    <property type="entry name" value="ARM-type_fold"/>
</dbReference>
<dbReference type="InterPro" id="IPR039874">
    <property type="entry name" value="WAPL"/>
</dbReference>
<dbReference type="InterPro" id="IPR022771">
    <property type="entry name" value="WAPL_C"/>
</dbReference>
<dbReference type="PANTHER" id="PTHR22100">
    <property type="entry name" value="WINGS APART-LIKE PROTEIN HOMOLOG"/>
    <property type="match status" value="1"/>
</dbReference>
<dbReference type="PANTHER" id="PTHR22100:SF13">
    <property type="entry name" value="WINGS APART-LIKE PROTEIN HOMOLOG"/>
    <property type="match status" value="1"/>
</dbReference>
<dbReference type="Pfam" id="PF07814">
    <property type="entry name" value="WAPL"/>
    <property type="match status" value="1"/>
</dbReference>
<dbReference type="SUPFAM" id="SSF48371">
    <property type="entry name" value="ARM repeat"/>
    <property type="match status" value="1"/>
</dbReference>
<accession>F4I7C7</accession>
<accession>O04085</accession>
<proteinExistence type="evidence at transcript level"/>
<feature type="chain" id="PRO_0000450125" description="Wings apart-like protein 1">
    <location>
        <begin position="1"/>
        <end position="930"/>
    </location>
</feature>
<feature type="domain" description="WAPL" evidence="2">
    <location>
        <begin position="854"/>
        <end position="909"/>
    </location>
</feature>
<feature type="region of interest" description="Disordered" evidence="3">
    <location>
        <begin position="540"/>
        <end position="566"/>
    </location>
</feature>
<feature type="compositionally biased region" description="Low complexity" evidence="3">
    <location>
        <begin position="541"/>
        <end position="553"/>
    </location>
</feature>
<feature type="compositionally biased region" description="Polar residues" evidence="3">
    <location>
        <begin position="554"/>
        <end position="566"/>
    </location>
</feature>
<reference key="1">
    <citation type="journal article" date="2000" name="Nature">
        <title>Sequence and analysis of chromosome 1 of the plant Arabidopsis thaliana.</title>
        <authorList>
            <person name="Theologis A."/>
            <person name="Ecker J.R."/>
            <person name="Palm C.J."/>
            <person name="Federspiel N.A."/>
            <person name="Kaul S."/>
            <person name="White O."/>
            <person name="Alonso J."/>
            <person name="Altafi H."/>
            <person name="Araujo R."/>
            <person name="Bowman C.L."/>
            <person name="Brooks S.Y."/>
            <person name="Buehler E."/>
            <person name="Chan A."/>
            <person name="Chao Q."/>
            <person name="Chen H."/>
            <person name="Cheuk R.F."/>
            <person name="Chin C.W."/>
            <person name="Chung M.K."/>
            <person name="Conn L."/>
            <person name="Conway A.B."/>
            <person name="Conway A.R."/>
            <person name="Creasy T.H."/>
            <person name="Dewar K."/>
            <person name="Dunn P."/>
            <person name="Etgu P."/>
            <person name="Feldblyum T.V."/>
            <person name="Feng J.-D."/>
            <person name="Fong B."/>
            <person name="Fujii C.Y."/>
            <person name="Gill J.E."/>
            <person name="Goldsmith A.D."/>
            <person name="Haas B."/>
            <person name="Hansen N.F."/>
            <person name="Hughes B."/>
            <person name="Huizar L."/>
            <person name="Hunter J.L."/>
            <person name="Jenkins J."/>
            <person name="Johnson-Hopson C."/>
            <person name="Khan S."/>
            <person name="Khaykin E."/>
            <person name="Kim C.J."/>
            <person name="Koo H.L."/>
            <person name="Kremenetskaia I."/>
            <person name="Kurtz D.B."/>
            <person name="Kwan A."/>
            <person name="Lam B."/>
            <person name="Langin-Hooper S."/>
            <person name="Lee A."/>
            <person name="Lee J.M."/>
            <person name="Lenz C.A."/>
            <person name="Li J.H."/>
            <person name="Li Y.-P."/>
            <person name="Lin X."/>
            <person name="Liu S.X."/>
            <person name="Liu Z.A."/>
            <person name="Luros J.S."/>
            <person name="Maiti R."/>
            <person name="Marziali A."/>
            <person name="Militscher J."/>
            <person name="Miranda M."/>
            <person name="Nguyen M."/>
            <person name="Nierman W.C."/>
            <person name="Osborne B.I."/>
            <person name="Pai G."/>
            <person name="Peterson J."/>
            <person name="Pham P.K."/>
            <person name="Rizzo M."/>
            <person name="Rooney T."/>
            <person name="Rowley D."/>
            <person name="Sakano H."/>
            <person name="Salzberg S.L."/>
            <person name="Schwartz J.R."/>
            <person name="Shinn P."/>
            <person name="Southwick A.M."/>
            <person name="Sun H."/>
            <person name="Tallon L.J."/>
            <person name="Tambunga G."/>
            <person name="Toriumi M.J."/>
            <person name="Town C.D."/>
            <person name="Utterback T."/>
            <person name="Van Aken S."/>
            <person name="Vaysberg M."/>
            <person name="Vysotskaia V.S."/>
            <person name="Walker M."/>
            <person name="Wu D."/>
            <person name="Yu G."/>
            <person name="Fraser C.M."/>
            <person name="Venter J.C."/>
            <person name="Davis R.W."/>
        </authorList>
    </citation>
    <scope>NUCLEOTIDE SEQUENCE [LARGE SCALE GENOMIC DNA]</scope>
    <source>
        <strain>cv. Columbia</strain>
    </source>
</reference>
<reference key="2">
    <citation type="journal article" date="2017" name="Plant J.">
        <title>Araport11: a complete reannotation of the Arabidopsis thaliana reference genome.</title>
        <authorList>
            <person name="Cheng C.Y."/>
            <person name="Krishnakumar V."/>
            <person name="Chan A.P."/>
            <person name="Thibaud-Nissen F."/>
            <person name="Schobel S."/>
            <person name="Town C.D."/>
        </authorList>
    </citation>
    <scope>GENOME REANNOTATION</scope>
    <source>
        <strain>cv. Columbia</strain>
    </source>
</reference>
<reference key="3">
    <citation type="journal article" date="2012" name="PLoS ONE">
        <title>Extensive phenotypic variation among allelic T-DNA inserts in Arabidopsis thaliana.</title>
        <authorList>
            <person name="Valentine M.E."/>
            <person name="Wolyniak M.J."/>
            <person name="Rutter M.T."/>
        </authorList>
    </citation>
    <scope>DISRUPTION PHENOTYPE</scope>
</reference>
<reference key="4">
    <citation type="journal article" date="2014" name="PLoS Genet.">
        <title>Arabidopsis thaliana WAPL is essential for the prophase removal of cohesin during meiosis.</title>
        <authorList>
            <person name="De K."/>
            <person name="Sterle L."/>
            <person name="Krueger L."/>
            <person name="Yang X."/>
            <person name="Makaroff C.A."/>
        </authorList>
    </citation>
    <scope>FUNCTION</scope>
    <scope>DISRUPTION PHENOTYPE</scope>
    <scope>TISSUE SPECIFICITY</scope>
    <source>
        <strain>cv. Columbia</strain>
    </source>
</reference>
<reference key="5">
    <citation type="journal article" date="2016" name="Plant Cell">
        <title>The Opposing Actions of Arabidopsis CHROMOSOME TRANSMISSION FIDELITY7 and WINGS APART-LIKE1 and 2 Differ in Mitotic and Meiotic Cells.</title>
        <authorList>
            <person name="De K."/>
            <person name="Bolanos-Villegas P."/>
            <person name="Mitra S."/>
            <person name="Yang X."/>
            <person name="Homan G."/>
            <person name="Jauh G.-Y."/>
            <person name="Makaroff C.A."/>
        </authorList>
    </citation>
    <scope>FUNCTION</scope>
    <scope>DISRUPTION PHENOTYPE</scope>
    <source>
        <strain>cv. Columbia</strain>
    </source>
</reference>
<comment type="function">
    <text evidence="1 5 6">Regulator of sister chromatid cohesion in meiosis which negatively regulates cohesin association with chromatin, acting as an antagonist of CTF7 (PubMed:25033056, PubMed:26813623). Cohesion ensures that chromosome partitioning is accurate in both meiotic and mitotic cells and plays an important role in DNA repair (By similarity). Essential for the prophase removal of cohesin during meiosis thus determining the timely release of meiotic cohesion (PubMed:25033056). Important for proper spindle attachment and assembly during meiosis (PubMed:25033056). Helps to prevent abnormal centromere association during prophase I in meiocytes (PubMed:25033056). Required for early embryonic patterning (PubMed:25033056). Also involved in chromosome segregation during mitosis (PubMed:25033056).</text>
</comment>
<comment type="subunit">
    <text evidence="1">Interacts with the cohesin complex throughout the cell cycle.</text>
</comment>
<comment type="subcellular location">
    <subcellularLocation>
        <location evidence="1">Nucleus</location>
    </subcellularLocation>
    <subcellularLocation>
        <location evidence="1">Chromosome</location>
    </subcellularLocation>
</comment>
<comment type="tissue specificity">
    <text evidence="5">Expressed in roots, leaves, buds and siliques.</text>
</comment>
<comment type="disruption phenotype">
    <text evidence="4 5 6">Fewer leaves, more flowers and higher germination rates (PubMed:23028719). Plants missing both WAPL1 and WAPL2 have relatively normal growth (slightly slower) and development but exhibit a significant reduction in male and female fertility (aborted pollen and ovules prior to fertilization and embryo defects in fertilized seed), due to blocked removal of cohesin from chromosomes during meiotic prophase (late zygotene/pachytene stage) resulting in chromosome bridges, broken chromosomes and uneven chromosome segregation, and leading to shorter siliques containing fewer seeds; this double mutant restores pollen viablitity to pollen-lethal ctf7 mutation (PubMed:25033056, PubMed:26813623). During mitosis, abnormal chromosome segregation but normal cohesin release (PubMed:25033056).</text>
</comment>
<comment type="similarity">
    <text evidence="8">Belongs to the WAPL family.</text>
</comment>
<comment type="sequence caution" evidence="8">
    <conflict type="erroneous gene model prediction">
        <sequence resource="EMBL-CDS" id="AAB65476"/>
    </conflict>
</comment>
<protein>
    <recommendedName>
        <fullName evidence="7">Wings apart-like protein 1</fullName>
        <shortName evidence="7">AtWAPL1</shortName>
    </recommendedName>
</protein>
<organism>
    <name type="scientific">Arabidopsis thaliana</name>
    <name type="common">Mouse-ear cress</name>
    <dbReference type="NCBI Taxonomy" id="3702"/>
    <lineage>
        <taxon>Eukaryota</taxon>
        <taxon>Viridiplantae</taxon>
        <taxon>Streptophyta</taxon>
        <taxon>Embryophyta</taxon>
        <taxon>Tracheophyta</taxon>
        <taxon>Spermatophyta</taxon>
        <taxon>Magnoliopsida</taxon>
        <taxon>eudicotyledons</taxon>
        <taxon>Gunneridae</taxon>
        <taxon>Pentapetalae</taxon>
        <taxon>rosids</taxon>
        <taxon>malvids</taxon>
        <taxon>Brassicales</taxon>
        <taxon>Brassicaceae</taxon>
        <taxon>Camelineae</taxon>
        <taxon>Arabidopsis</taxon>
    </lineage>
</organism>
<evidence type="ECO:0000250" key="1">
    <source>
        <dbReference type="UniProtKB" id="Q7Z5K2"/>
    </source>
</evidence>
<evidence type="ECO:0000255" key="2">
    <source>
        <dbReference type="PROSITE-ProRule" id="PRU00603"/>
    </source>
</evidence>
<evidence type="ECO:0000256" key="3">
    <source>
        <dbReference type="SAM" id="MobiDB-lite"/>
    </source>
</evidence>
<evidence type="ECO:0000269" key="4">
    <source>
    </source>
</evidence>
<evidence type="ECO:0000269" key="5">
    <source>
    </source>
</evidence>
<evidence type="ECO:0000269" key="6">
    <source>
    </source>
</evidence>
<evidence type="ECO:0000303" key="7">
    <source>
    </source>
</evidence>
<evidence type="ECO:0000305" key="8"/>
<evidence type="ECO:0000312" key="9">
    <source>
        <dbReference type="Araport" id="AT1G11060"/>
    </source>
</evidence>
<evidence type="ECO:0000312" key="10">
    <source>
        <dbReference type="EMBL" id="AAB65476.1"/>
    </source>
</evidence>
<keyword id="KW-0131">Cell cycle</keyword>
<keyword id="KW-0132">Cell division</keyword>
<keyword id="KW-0158">Chromosome</keyword>
<keyword id="KW-0159">Chromosome partition</keyword>
<keyword id="KW-0469">Meiosis</keyword>
<keyword id="KW-0498">Mitosis</keyword>
<keyword id="KW-0539">Nucleus</keyword>
<keyword id="KW-1185">Reference proteome</keyword>